<protein>
    <recommendedName>
        <fullName evidence="1">Urease accessory protein UreD</fullName>
    </recommendedName>
</protein>
<dbReference type="EMBL" id="CP000950">
    <property type="protein sequence ID" value="ACA67435.1"/>
    <property type="molecule type" value="Genomic_DNA"/>
</dbReference>
<dbReference type="RefSeq" id="WP_011192842.1">
    <property type="nucleotide sequence ID" value="NZ_CP009792.1"/>
</dbReference>
<dbReference type="SMR" id="B1JR75"/>
<dbReference type="KEGG" id="ypy:YPK_1137"/>
<dbReference type="PATRIC" id="fig|502800.11.peg.1771"/>
<dbReference type="GO" id="GO:0005737">
    <property type="term" value="C:cytoplasm"/>
    <property type="evidence" value="ECO:0007669"/>
    <property type="project" value="UniProtKB-SubCell"/>
</dbReference>
<dbReference type="GO" id="GO:0016151">
    <property type="term" value="F:nickel cation binding"/>
    <property type="evidence" value="ECO:0007669"/>
    <property type="project" value="UniProtKB-UniRule"/>
</dbReference>
<dbReference type="HAMAP" id="MF_01384">
    <property type="entry name" value="UreD"/>
    <property type="match status" value="1"/>
</dbReference>
<dbReference type="InterPro" id="IPR002669">
    <property type="entry name" value="UreD"/>
</dbReference>
<dbReference type="PANTHER" id="PTHR33643">
    <property type="entry name" value="UREASE ACCESSORY PROTEIN D"/>
    <property type="match status" value="1"/>
</dbReference>
<dbReference type="PANTHER" id="PTHR33643:SF1">
    <property type="entry name" value="UREASE ACCESSORY PROTEIN D"/>
    <property type="match status" value="1"/>
</dbReference>
<dbReference type="Pfam" id="PF01774">
    <property type="entry name" value="UreD"/>
    <property type="match status" value="1"/>
</dbReference>
<keyword id="KW-0143">Chaperone</keyword>
<keyword id="KW-0963">Cytoplasm</keyword>
<keyword id="KW-0996">Nickel insertion</keyword>
<evidence type="ECO:0000255" key="1">
    <source>
        <dbReference type="HAMAP-Rule" id="MF_01384"/>
    </source>
</evidence>
<gene>
    <name evidence="1" type="primary">ureD</name>
    <name type="ordered locus">YPK_1137</name>
</gene>
<sequence>MTAQSQNIVETPSRVRAHALGVNAPELAKYQDEPAQMRSGAVGKSGYLKLRFAKREHRSILAEMERRVPSLVQKALYWDEEIPELPCVTMISTSGCILQGDRLATDVHVEAGACAHVTTQSATKVHMMNANYASQIQNFIVEEGGYLEFMPDPLIPHRNSRFITDTTISIHPTATAIYSEVLMSGRKYHHADERFGFDVYSSRVAAQNLAGKELFVEKYVLEPKVESLDAVGVMQTFDAFGNVILLTPKEHHDRILARVPAHFDIKGGIASGATRLPNDCGLVFKALGIDSAGVKAEIRQFWKIAREEILGVTLPEQFLWR</sequence>
<proteinExistence type="inferred from homology"/>
<accession>B1JR75</accession>
<comment type="function">
    <text evidence="1">Required for maturation of urease via the functional incorporation of the urease nickel metallocenter.</text>
</comment>
<comment type="subunit">
    <text evidence="1">UreD, UreF and UreG form a complex that acts as a GTP-hydrolysis-dependent molecular chaperone, activating the urease apoprotein by helping to assemble the nickel containing metallocenter of UreC. The UreE protein probably delivers the nickel.</text>
</comment>
<comment type="subcellular location">
    <subcellularLocation>
        <location evidence="1">Cytoplasm</location>
    </subcellularLocation>
</comment>
<comment type="similarity">
    <text evidence="1">Belongs to the UreD family.</text>
</comment>
<reference key="1">
    <citation type="submission" date="2008-02" db="EMBL/GenBank/DDBJ databases">
        <title>Complete sequence of Yersinia pseudotuberculosis YPIII.</title>
        <authorList>
            <consortium name="US DOE Joint Genome Institute"/>
            <person name="Copeland A."/>
            <person name="Lucas S."/>
            <person name="Lapidus A."/>
            <person name="Glavina del Rio T."/>
            <person name="Dalin E."/>
            <person name="Tice H."/>
            <person name="Bruce D."/>
            <person name="Goodwin L."/>
            <person name="Pitluck S."/>
            <person name="Munk A.C."/>
            <person name="Brettin T."/>
            <person name="Detter J.C."/>
            <person name="Han C."/>
            <person name="Tapia R."/>
            <person name="Schmutz J."/>
            <person name="Larimer F."/>
            <person name="Land M."/>
            <person name="Hauser L."/>
            <person name="Challacombe J.F."/>
            <person name="Green L."/>
            <person name="Lindler L.E."/>
            <person name="Nikolich M.P."/>
            <person name="Richardson P."/>
        </authorList>
    </citation>
    <scope>NUCLEOTIDE SEQUENCE [LARGE SCALE GENOMIC DNA]</scope>
    <source>
        <strain>YPIII</strain>
    </source>
</reference>
<feature type="chain" id="PRO_1000145106" description="Urease accessory protein UreD">
    <location>
        <begin position="1"/>
        <end position="321"/>
    </location>
</feature>
<name>URED_YERPY</name>
<organism>
    <name type="scientific">Yersinia pseudotuberculosis serotype O:3 (strain YPIII)</name>
    <dbReference type="NCBI Taxonomy" id="502800"/>
    <lineage>
        <taxon>Bacteria</taxon>
        <taxon>Pseudomonadati</taxon>
        <taxon>Pseudomonadota</taxon>
        <taxon>Gammaproteobacteria</taxon>
        <taxon>Enterobacterales</taxon>
        <taxon>Yersiniaceae</taxon>
        <taxon>Yersinia</taxon>
    </lineage>
</organism>